<reference key="1">
    <citation type="journal article" date="1991" name="Mol. Microbiol.">
        <title>The spoIIIA operon of Bacillus subtilis defines a new temporal class of mother-cell-specific sporulation genes under the control of the sigma E form of RNA polymerase.</title>
        <authorList>
            <person name="Illing N."/>
            <person name="Errington J."/>
        </authorList>
    </citation>
    <scope>NUCLEOTIDE SEQUENCE [GENOMIC DNA]</scope>
    <source>
        <strain>168</strain>
    </source>
</reference>
<reference key="2">
    <citation type="submission" date="1995-09" db="EMBL/GenBank/DDBJ databases">
        <authorList>
            <person name="Guerout-Fleury A.M."/>
            <person name="Gonzy-Treboul G."/>
            <person name="Stragier P."/>
        </authorList>
    </citation>
    <scope>NUCLEOTIDE SEQUENCE [GENOMIC DNA]</scope>
    <source>
        <strain>168 / JH642</strain>
    </source>
</reference>
<reference key="3">
    <citation type="journal article" date="1996" name="Microbiology">
        <title>Systematic sequencing of the 283 kb 210 degrees-232 degrees region of the Bacillus subtilis genome containing the skin element and many sporulation genes.</title>
        <authorList>
            <person name="Mizuno M."/>
            <person name="Masuda S."/>
            <person name="Takemaru K."/>
            <person name="Hosono S."/>
            <person name="Sato T."/>
            <person name="Takeuchi M."/>
            <person name="Kobayashi Y."/>
        </authorList>
    </citation>
    <scope>NUCLEOTIDE SEQUENCE [GENOMIC DNA]</scope>
    <source>
        <strain>168 / JH642</strain>
    </source>
</reference>
<reference key="4">
    <citation type="journal article" date="1997" name="Nature">
        <title>The complete genome sequence of the Gram-positive bacterium Bacillus subtilis.</title>
        <authorList>
            <person name="Kunst F."/>
            <person name="Ogasawara N."/>
            <person name="Moszer I."/>
            <person name="Albertini A.M."/>
            <person name="Alloni G."/>
            <person name="Azevedo V."/>
            <person name="Bertero M.G."/>
            <person name="Bessieres P."/>
            <person name="Bolotin A."/>
            <person name="Borchert S."/>
            <person name="Borriss R."/>
            <person name="Boursier L."/>
            <person name="Brans A."/>
            <person name="Braun M."/>
            <person name="Brignell S.C."/>
            <person name="Bron S."/>
            <person name="Brouillet S."/>
            <person name="Bruschi C.V."/>
            <person name="Caldwell B."/>
            <person name="Capuano V."/>
            <person name="Carter N.M."/>
            <person name="Choi S.-K."/>
            <person name="Codani J.-J."/>
            <person name="Connerton I.F."/>
            <person name="Cummings N.J."/>
            <person name="Daniel R.A."/>
            <person name="Denizot F."/>
            <person name="Devine K.M."/>
            <person name="Duesterhoeft A."/>
            <person name="Ehrlich S.D."/>
            <person name="Emmerson P.T."/>
            <person name="Entian K.-D."/>
            <person name="Errington J."/>
            <person name="Fabret C."/>
            <person name="Ferrari E."/>
            <person name="Foulger D."/>
            <person name="Fritz C."/>
            <person name="Fujita M."/>
            <person name="Fujita Y."/>
            <person name="Fuma S."/>
            <person name="Galizzi A."/>
            <person name="Galleron N."/>
            <person name="Ghim S.-Y."/>
            <person name="Glaser P."/>
            <person name="Goffeau A."/>
            <person name="Golightly E.J."/>
            <person name="Grandi G."/>
            <person name="Guiseppi G."/>
            <person name="Guy B.J."/>
            <person name="Haga K."/>
            <person name="Haiech J."/>
            <person name="Harwood C.R."/>
            <person name="Henaut A."/>
            <person name="Hilbert H."/>
            <person name="Holsappel S."/>
            <person name="Hosono S."/>
            <person name="Hullo M.-F."/>
            <person name="Itaya M."/>
            <person name="Jones L.-M."/>
            <person name="Joris B."/>
            <person name="Karamata D."/>
            <person name="Kasahara Y."/>
            <person name="Klaerr-Blanchard M."/>
            <person name="Klein C."/>
            <person name="Kobayashi Y."/>
            <person name="Koetter P."/>
            <person name="Koningstein G."/>
            <person name="Krogh S."/>
            <person name="Kumano M."/>
            <person name="Kurita K."/>
            <person name="Lapidus A."/>
            <person name="Lardinois S."/>
            <person name="Lauber J."/>
            <person name="Lazarevic V."/>
            <person name="Lee S.-M."/>
            <person name="Levine A."/>
            <person name="Liu H."/>
            <person name="Masuda S."/>
            <person name="Mauel C."/>
            <person name="Medigue C."/>
            <person name="Medina N."/>
            <person name="Mellado R.P."/>
            <person name="Mizuno M."/>
            <person name="Moestl D."/>
            <person name="Nakai S."/>
            <person name="Noback M."/>
            <person name="Noone D."/>
            <person name="O'Reilly M."/>
            <person name="Ogawa K."/>
            <person name="Ogiwara A."/>
            <person name="Oudega B."/>
            <person name="Park S.-H."/>
            <person name="Parro V."/>
            <person name="Pohl T.M."/>
            <person name="Portetelle D."/>
            <person name="Porwollik S."/>
            <person name="Prescott A.M."/>
            <person name="Presecan E."/>
            <person name="Pujic P."/>
            <person name="Purnelle B."/>
            <person name="Rapoport G."/>
            <person name="Rey M."/>
            <person name="Reynolds S."/>
            <person name="Rieger M."/>
            <person name="Rivolta C."/>
            <person name="Rocha E."/>
            <person name="Roche B."/>
            <person name="Rose M."/>
            <person name="Sadaie Y."/>
            <person name="Sato T."/>
            <person name="Scanlan E."/>
            <person name="Schleich S."/>
            <person name="Schroeter R."/>
            <person name="Scoffone F."/>
            <person name="Sekiguchi J."/>
            <person name="Sekowska A."/>
            <person name="Seror S.J."/>
            <person name="Serror P."/>
            <person name="Shin B.-S."/>
            <person name="Soldo B."/>
            <person name="Sorokin A."/>
            <person name="Tacconi E."/>
            <person name="Takagi T."/>
            <person name="Takahashi H."/>
            <person name="Takemaru K."/>
            <person name="Takeuchi M."/>
            <person name="Tamakoshi A."/>
            <person name="Tanaka T."/>
            <person name="Terpstra P."/>
            <person name="Tognoni A."/>
            <person name="Tosato V."/>
            <person name="Uchiyama S."/>
            <person name="Vandenbol M."/>
            <person name="Vannier F."/>
            <person name="Vassarotti A."/>
            <person name="Viari A."/>
            <person name="Wambutt R."/>
            <person name="Wedler E."/>
            <person name="Wedler H."/>
            <person name="Weitzenegger T."/>
            <person name="Winters P."/>
            <person name="Wipat A."/>
            <person name="Yamamoto H."/>
            <person name="Yamane K."/>
            <person name="Yasumoto K."/>
            <person name="Yata K."/>
            <person name="Yoshida K."/>
            <person name="Yoshikawa H.-F."/>
            <person name="Zumstein E."/>
            <person name="Yoshikawa H."/>
            <person name="Danchin A."/>
        </authorList>
    </citation>
    <scope>NUCLEOTIDE SEQUENCE [LARGE SCALE GENOMIC DNA]</scope>
    <source>
        <strain>168</strain>
    </source>
</reference>
<gene>
    <name type="primary">spoIIIAA</name>
    <name type="ordered locus">BSU24430</name>
</gene>
<evidence type="ECO:0000255" key="1"/>
<proteinExistence type="predicted"/>
<keyword id="KW-0067">ATP-binding</keyword>
<keyword id="KW-0547">Nucleotide-binding</keyword>
<keyword id="KW-1185">Reference proteome</keyword>
<keyword id="KW-0749">Sporulation</keyword>
<dbReference type="EMBL" id="X61962">
    <property type="protein sequence ID" value="CAA43959.1"/>
    <property type="molecule type" value="Genomic_DNA"/>
</dbReference>
<dbReference type="EMBL" id="U35252">
    <property type="protein sequence ID" value="AAA76720.1"/>
    <property type="molecule type" value="Genomic_DNA"/>
</dbReference>
<dbReference type="EMBL" id="D84432">
    <property type="protein sequence ID" value="BAA12560.1"/>
    <property type="molecule type" value="Genomic_DNA"/>
</dbReference>
<dbReference type="EMBL" id="AL009126">
    <property type="protein sequence ID" value="CAB14374.1"/>
    <property type="molecule type" value="Genomic_DNA"/>
</dbReference>
<dbReference type="PIR" id="S16622">
    <property type="entry name" value="S16622"/>
</dbReference>
<dbReference type="RefSeq" id="NP_390323.1">
    <property type="nucleotide sequence ID" value="NC_000964.3"/>
</dbReference>
<dbReference type="RefSeq" id="WP_003230226.1">
    <property type="nucleotide sequence ID" value="NZ_OZ025638.1"/>
</dbReference>
<dbReference type="FunCoup" id="Q01367">
    <property type="interactions" value="24"/>
</dbReference>
<dbReference type="STRING" id="224308.BSU24430"/>
<dbReference type="TCDB" id="9.B.70.1.1">
    <property type="family name" value="the multicomponent putative spoiiiae exporter (spoiiia-e) family"/>
</dbReference>
<dbReference type="PaxDb" id="224308-BSU24430"/>
<dbReference type="EnsemblBacteria" id="CAB14374">
    <property type="protein sequence ID" value="CAB14374"/>
    <property type="gene ID" value="BSU_24430"/>
</dbReference>
<dbReference type="GeneID" id="938563"/>
<dbReference type="KEGG" id="bsu:BSU24430"/>
<dbReference type="PATRIC" id="fig|224308.179.peg.2661"/>
<dbReference type="eggNOG" id="COG3854">
    <property type="taxonomic scope" value="Bacteria"/>
</dbReference>
<dbReference type="InParanoid" id="Q01367"/>
<dbReference type="OrthoDB" id="9768243at2"/>
<dbReference type="PhylomeDB" id="Q01367"/>
<dbReference type="BioCyc" id="BSUB:BSU24430-MONOMER"/>
<dbReference type="Proteomes" id="UP000001570">
    <property type="component" value="Chromosome"/>
</dbReference>
<dbReference type="GO" id="GO:0005524">
    <property type="term" value="F:ATP binding"/>
    <property type="evidence" value="ECO:0007669"/>
    <property type="project" value="UniProtKB-KW"/>
</dbReference>
<dbReference type="GO" id="GO:0016887">
    <property type="term" value="F:ATP hydrolysis activity"/>
    <property type="evidence" value="ECO:0007669"/>
    <property type="project" value="InterPro"/>
</dbReference>
<dbReference type="GO" id="GO:0030435">
    <property type="term" value="P:sporulation resulting in formation of a cellular spore"/>
    <property type="evidence" value="ECO:0007669"/>
    <property type="project" value="UniProtKB-KW"/>
</dbReference>
<dbReference type="CDD" id="cd00009">
    <property type="entry name" value="AAA"/>
    <property type="match status" value="1"/>
</dbReference>
<dbReference type="Gene3D" id="3.40.50.300">
    <property type="entry name" value="P-loop containing nucleotide triphosphate hydrolases"/>
    <property type="match status" value="1"/>
</dbReference>
<dbReference type="InterPro" id="IPR003593">
    <property type="entry name" value="AAA+_ATPase"/>
</dbReference>
<dbReference type="InterPro" id="IPR027417">
    <property type="entry name" value="P-loop_NTPase"/>
</dbReference>
<dbReference type="InterPro" id="IPR014217">
    <property type="entry name" value="Spore_III_AA"/>
</dbReference>
<dbReference type="InterPro" id="IPR045735">
    <property type="entry name" value="Spore_III_AA_AAA+_ATPase"/>
</dbReference>
<dbReference type="NCBIfam" id="TIGR02858">
    <property type="entry name" value="spore_III_AA"/>
    <property type="match status" value="1"/>
</dbReference>
<dbReference type="PANTHER" id="PTHR20953">
    <property type="entry name" value="KINASE-RELATED"/>
    <property type="match status" value="1"/>
</dbReference>
<dbReference type="PANTHER" id="PTHR20953:SF3">
    <property type="entry name" value="P-LOOP CONTAINING NUCLEOSIDE TRIPHOSPHATE HYDROLASES SUPERFAMILY PROTEIN"/>
    <property type="match status" value="1"/>
</dbReference>
<dbReference type="Pfam" id="PF19568">
    <property type="entry name" value="Spore_III_AA"/>
    <property type="match status" value="1"/>
</dbReference>
<dbReference type="SMART" id="SM00382">
    <property type="entry name" value="AAA"/>
    <property type="match status" value="1"/>
</dbReference>
<dbReference type="SUPFAM" id="SSF52540">
    <property type="entry name" value="P-loop containing nucleoside triphosphate hydrolases"/>
    <property type="match status" value="1"/>
</dbReference>
<organism>
    <name type="scientific">Bacillus subtilis (strain 168)</name>
    <dbReference type="NCBI Taxonomy" id="224308"/>
    <lineage>
        <taxon>Bacteria</taxon>
        <taxon>Bacillati</taxon>
        <taxon>Bacillota</taxon>
        <taxon>Bacilli</taxon>
        <taxon>Bacillales</taxon>
        <taxon>Bacillaceae</taxon>
        <taxon>Bacillus</taxon>
    </lineage>
</organism>
<protein>
    <recommendedName>
        <fullName>Stage III sporulation protein AA</fullName>
    </recommendedName>
</protein>
<feature type="chain" id="PRO_0000072065" description="Stage III sporulation protein AA">
    <location>
        <begin position="1"/>
        <end position="307"/>
    </location>
</feature>
<feature type="binding site" evidence="1">
    <location>
        <begin position="143"/>
        <end position="150"/>
    </location>
    <ligand>
        <name>ATP</name>
        <dbReference type="ChEBI" id="CHEBI:30616"/>
    </ligand>
</feature>
<name>SP3AA_BACSU</name>
<sequence length="307" mass="34297">MNEIAEVLPESMKNALSEIPEQQWLEIEEVRIRINRPVELIRRGQPVYLSYAGTAEDAHLILSRLSNYSMYTLEEELKKGYVTIRGGHRVGLAGRVITENGGVKGLRDIASFNIRIARQKLGIAEPLLPYLYQNSWLNTLIIGPPQTGKTTLLRDLARLSSTGKKNMLPVKTGIVDERSEIAGCLRGIPQHQFGQRIDVLDACPKAEGLMMMIRSMSPEVMIVDEIGRMEDTDALLEALHAGVSVIVSAHGWSISDLMKRPSLKRLWEERAFDRYLELSRAKGPGTVSQIYDKDGNVLSRTTGVKTC</sequence>
<accession>Q01367</accession>